<reference key="1">
    <citation type="journal article" date="2010" name="J. Proteome Res.">
        <title>Molecular diversification of peptide toxins from the tarantula Haplopelma hainanum (Ornithoctonus hainana) venom based on transcriptomic, peptidomic, and genomic analyses.</title>
        <authorList>
            <person name="Tang X."/>
            <person name="Zhang Y."/>
            <person name="Hu W."/>
            <person name="Xu D."/>
            <person name="Tao H."/>
            <person name="Yang X."/>
            <person name="Li Y."/>
            <person name="Jiang L."/>
            <person name="Liang S."/>
        </authorList>
    </citation>
    <scope>NUCLEOTIDE SEQUENCE [LARGE SCALE MRNA]</scope>
    <scope>PROTEIN SEQUENCE OF 75-113</scope>
    <scope>IDENTIFICATION BY MASS SPECTROMETRY</scope>
    <source>
        <tissue>Venom</tissue>
        <tissue>Venom gland</tissue>
    </source>
</reference>
<proteinExistence type="evidence at protein level"/>
<accession>D2Y294</accession>
<evidence type="ECO:0000250" key="1"/>
<evidence type="ECO:0000255" key="2"/>
<evidence type="ECO:0000256" key="3">
    <source>
        <dbReference type="SAM" id="MobiDB-lite"/>
    </source>
</evidence>
<evidence type="ECO:0000269" key="4">
    <source>
    </source>
</evidence>
<evidence type="ECO:0000305" key="5"/>
<name>H1621_CYRHA</name>
<feature type="signal peptide" evidence="2">
    <location>
        <begin position="1"/>
        <end position="21"/>
    </location>
</feature>
<feature type="propeptide" id="PRO_0000400897" evidence="4">
    <location>
        <begin position="22"/>
        <end position="74"/>
    </location>
</feature>
<feature type="peptide" id="PRO_0000400898" description="U11-theraphotoxin-Hhn1a">
    <location>
        <begin position="75"/>
        <end position="113"/>
    </location>
</feature>
<feature type="region of interest" description="Disordered" evidence="3">
    <location>
        <begin position="61"/>
        <end position="83"/>
    </location>
</feature>
<feature type="disulfide bond" evidence="1">
    <location>
        <begin position="75"/>
        <end position="90"/>
    </location>
</feature>
<feature type="disulfide bond" evidence="1">
    <location>
        <begin position="82"/>
        <end position="95"/>
    </location>
</feature>
<feature type="disulfide bond" evidence="1">
    <location>
        <begin position="89"/>
        <end position="110"/>
    </location>
</feature>
<protein>
    <recommendedName>
        <fullName>U11-theraphotoxin-Hhn1a</fullName>
        <shortName>U11-TRTX-Hhn1a</shortName>
    </recommendedName>
    <alternativeName>
        <fullName>Hainantoxin-XVI.21</fullName>
        <shortName>HNTX-XVI.21</shortName>
    </alternativeName>
    <alternativeName>
        <fullName>Peptide F4-19.87</fullName>
    </alternativeName>
</protein>
<organism>
    <name type="scientific">Cyriopagopus hainanus</name>
    <name type="common">Chinese bird spider</name>
    <name type="synonym">Haplopelma hainanum</name>
    <dbReference type="NCBI Taxonomy" id="209901"/>
    <lineage>
        <taxon>Eukaryota</taxon>
        <taxon>Metazoa</taxon>
        <taxon>Ecdysozoa</taxon>
        <taxon>Arthropoda</taxon>
        <taxon>Chelicerata</taxon>
        <taxon>Arachnida</taxon>
        <taxon>Araneae</taxon>
        <taxon>Mygalomorphae</taxon>
        <taxon>Theraphosidae</taxon>
        <taxon>Haplopelma</taxon>
    </lineage>
</organism>
<sequence length="113" mass="13131">MNTVRVTFLLVFVLAVSLGRADKEENRMEMQEKTEQGKSYLDFAENLLLQKLEELEAKLLEEDSEESRNSRQKRCIGEGVPCDENDPRCCSGLVCLKPTLHGIWYKSYYCYKK</sequence>
<keyword id="KW-0903">Direct protein sequencing</keyword>
<keyword id="KW-1015">Disulfide bond</keyword>
<keyword id="KW-0872">Ion channel impairing toxin</keyword>
<keyword id="KW-0960">Knottin</keyword>
<keyword id="KW-0964">Secreted</keyword>
<keyword id="KW-0732">Signal</keyword>
<keyword id="KW-0800">Toxin</keyword>
<comment type="function">
    <text evidence="1">Probable ion channel inhibitor.</text>
</comment>
<comment type="subcellular location">
    <subcellularLocation>
        <location>Secreted</location>
    </subcellularLocation>
</comment>
<comment type="tissue specificity">
    <text>Expressed by the venom gland.</text>
</comment>
<comment type="domain">
    <text evidence="1">The presence of a 'disulfide through disulfide knot' structurally defines this protein as a knottin.</text>
</comment>
<comment type="similarity">
    <text evidence="5">Belongs to the neurotoxin 14 (magi-1) family. 01 (HNTX-16) subfamily.</text>
</comment>
<dbReference type="EMBL" id="GU292971">
    <property type="protein sequence ID" value="ADB56787.1"/>
    <property type="molecule type" value="mRNA"/>
</dbReference>
<dbReference type="ArachnoServer" id="AS001592">
    <property type="toxin name" value="U11-theraphotoxin-Hhn1a"/>
</dbReference>
<dbReference type="GO" id="GO:0005576">
    <property type="term" value="C:extracellular region"/>
    <property type="evidence" value="ECO:0007669"/>
    <property type="project" value="UniProtKB-SubCell"/>
</dbReference>
<dbReference type="GO" id="GO:0019871">
    <property type="term" value="F:sodium channel inhibitor activity"/>
    <property type="evidence" value="ECO:0007669"/>
    <property type="project" value="InterPro"/>
</dbReference>
<dbReference type="GO" id="GO:0090729">
    <property type="term" value="F:toxin activity"/>
    <property type="evidence" value="ECO:0007669"/>
    <property type="project" value="UniProtKB-KW"/>
</dbReference>
<dbReference type="InterPro" id="IPR012627">
    <property type="entry name" value="Toxin_22"/>
</dbReference>
<dbReference type="Pfam" id="PF08092">
    <property type="entry name" value="Toxin_22"/>
    <property type="match status" value="1"/>
</dbReference>